<organism>
    <name type="scientific">Conus purpurascens</name>
    <name type="common">Purple cone</name>
    <dbReference type="NCBI Taxonomy" id="41690"/>
    <lineage>
        <taxon>Eukaryota</taxon>
        <taxon>Metazoa</taxon>
        <taxon>Spiralia</taxon>
        <taxon>Lophotrochozoa</taxon>
        <taxon>Mollusca</taxon>
        <taxon>Gastropoda</taxon>
        <taxon>Caenogastropoda</taxon>
        <taxon>Neogastropoda</taxon>
        <taxon>Conoidea</taxon>
        <taxon>Conidae</taxon>
        <taxon>Conus</taxon>
        <taxon>Chelyconus</taxon>
    </lineage>
</organism>
<keyword id="KW-0002">3D-structure</keyword>
<keyword id="KW-0008">Acetylcholine receptor inhibiting toxin</keyword>
<keyword id="KW-0027">Amidation</keyword>
<keyword id="KW-0165">Cleavage on pair of basic residues</keyword>
<keyword id="KW-0903">Direct protein sequencing</keyword>
<keyword id="KW-1015">Disulfide bond</keyword>
<keyword id="KW-0379">Hydroxylation</keyword>
<keyword id="KW-0872">Ion channel impairing toxin</keyword>
<keyword id="KW-0528">Neurotoxin</keyword>
<keyword id="KW-0629">Postsynaptic neurotoxin</keyword>
<keyword id="KW-0964">Secreted</keyword>
<keyword id="KW-0732">Signal</keyword>
<keyword id="KW-0800">Toxin</keyword>
<evidence type="ECO:0000255" key="1"/>
<evidence type="ECO:0000269" key="2">
    <source>
    </source>
</evidence>
<evidence type="ECO:0000269" key="3">
    <source>
    </source>
</evidence>
<evidence type="ECO:0000269" key="4">
    <source>
    </source>
</evidence>
<evidence type="ECO:0000303" key="5">
    <source>
    </source>
</evidence>
<evidence type="ECO:0000303" key="6">
    <source>
    </source>
</evidence>
<evidence type="ECO:0000305" key="7"/>
<evidence type="ECO:0000305" key="8">
    <source>
    </source>
</evidence>
<evidence type="ECO:0007744" key="9">
    <source>
        <dbReference type="PDB" id="1AS5"/>
    </source>
</evidence>
<evidence type="ECO:0007744" key="10">
    <source>
        <dbReference type="PDB" id="1JLO"/>
    </source>
</evidence>
<evidence type="ECO:0007829" key="11">
    <source>
        <dbReference type="PDB" id="1AS5"/>
    </source>
</evidence>
<evidence type="ECO:0007829" key="12">
    <source>
        <dbReference type="PDB" id="1JLO"/>
    </source>
</evidence>
<protein>
    <recommendedName>
        <fullName evidence="5 6">Psi-conotoxin PIIIE</fullName>
    </recommendedName>
    <alternativeName>
        <fullName>Psi-conotoxin P3.8</fullName>
    </alternativeName>
</protein>
<sequence length="75" mass="8348">MSKLGALLTICLLLFPITALLMDGDQPADRPAERMDYDISSEVHRLLERRHPPCCMYGRCRRYPGCSSASCCQGG</sequence>
<proteinExistence type="evidence at protein level"/>
<comment type="function">
    <text evidence="3">Psi-conotoxins act on postsynaptic membranes, and act as non-competitive antagonist of nicotinic acetylcholine receptors (nAChR). Is more toxic than Psi-conotoxin PIIIF. In vivo, has paralytic activity when injected intraperitoneally into goldfish.</text>
</comment>
<comment type="subcellular location">
    <subcellularLocation>
        <location evidence="3">Secreted</location>
    </subcellularLocation>
</comment>
<comment type="tissue specificity">
    <text evidence="8">Expressed by the venom duct.</text>
</comment>
<comment type="domain">
    <text evidence="7">The cysteine framework is III (CC-C-C-CC). Classified in the M-4 branch, since 4 residues stand between the fourth and the fifth cysteine residues.</text>
</comment>
<comment type="mass spectrometry" mass="2716.0" method="LSI" evidence="3"/>
<comment type="similarity">
    <text evidence="7">Belongs to the conotoxin M superfamily.</text>
</comment>
<accession>P56529</accession>
<name>CM3E_CONPU</name>
<reference key="1">
    <citation type="journal article" date="1997" name="Biochemistry">
        <title>A noncompetitive peptide inhibitor of the nicotinic acetylcholine receptor from Conus purpurascens venom.</title>
        <authorList>
            <person name="Shon K.-J."/>
            <person name="Grilley M."/>
            <person name="Jacobsen R.B."/>
            <person name="Cartier G.E."/>
            <person name="Hopkins C."/>
            <person name="Gray W.R."/>
            <person name="Watkins M."/>
            <person name="Hillyard D.R."/>
            <person name="Rivier J.E."/>
            <person name="Torres J."/>
            <person name="Yoshikami D."/>
            <person name="Olivera B.M."/>
        </authorList>
    </citation>
    <scope>NUCLEOTIDE SEQUENCE [MRNA]</scope>
    <scope>PROTEIN SEQUENCE OF 51-74</scope>
    <scope>FUNCTION</scope>
    <scope>SYNTHESIS OF 51-74</scope>
    <scope>HYDROXYLATION AT PRO-52; PRO-53 AND PRO-64</scope>
    <scope>AMIDATION AT GLY-74</scope>
    <scope>MASS SPECTROMETRY</scope>
    <scope>SUBCELLULAR LOCATION</scope>
    <source>
        <tissue>Venom</tissue>
        <tissue>Venom duct</tissue>
    </source>
</reference>
<reference key="2">
    <citation type="journal article" date="2005" name="Biochemistry">
        <title>Definition of the M-conotoxin superfamily: characterization of novel peptides from molluscivorous Conus venoms.</title>
        <authorList>
            <person name="Corpuz G.P."/>
            <person name="Jacobsen R.B."/>
            <person name="Jimenez E.C."/>
            <person name="Watkins M."/>
            <person name="Walker C."/>
            <person name="Colledge C."/>
            <person name="Garrett J.E."/>
            <person name="McDougal O."/>
            <person name="Li W."/>
            <person name="Gray W.R."/>
            <person name="Hillyard D.R."/>
            <person name="Rivier J."/>
            <person name="McIntosh J.M."/>
            <person name="Cruz L.J."/>
            <person name="Olivera B.M."/>
        </authorList>
    </citation>
    <scope>NUCLEOTIDE SEQUENCE [MRNA]</scope>
    <source>
        <tissue>Venom duct</tissue>
    </source>
</reference>
<reference key="3">
    <citation type="journal article" date="1998" name="Biochemistry">
        <title>Three-dimensional solution structure of conotoxin psi-PIIIE, an acetylcholine gated ion channel antagonist.</title>
        <authorList>
            <person name="Mitchell S.S."/>
            <person name="Shon K.-J."/>
            <person name="Foster M.P."/>
            <person name="Davis D.R."/>
            <person name="Olivera B.M."/>
            <person name="Ireland C.M."/>
        </authorList>
    </citation>
    <scope>STRUCTURE BY NMR OF 51-74</scope>
    <scope>HYDROXYLATION AT PRO-52; PRO-53 AND PRO-64</scope>
    <scope>AMIDATION AT GLY-74</scope>
    <scope>DISULFIDE BONDS</scope>
</reference>
<reference key="4">
    <citation type="journal article" date="2003" name="Biochemistry">
        <title>An improved solution structure for psi-conotoxin PiiiE.</title>
        <authorList>
            <person name="Van Wagoner R.M."/>
            <person name="Ireland C.M."/>
        </authorList>
    </citation>
    <scope>STRUCTURE BY NMR OF 51-75</scope>
    <scope>HYDROXYLATION AT PRO-52; PRO-53 AND PRO-64</scope>
    <scope>AMIDATION AT GLY-74</scope>
    <scope>DISULFIDE BONDS</scope>
</reference>
<feature type="signal peptide" evidence="1">
    <location>
        <begin position="1"/>
        <end position="19"/>
    </location>
</feature>
<feature type="propeptide" id="PRO_0000246005" evidence="8">
    <location>
        <begin position="20"/>
        <end position="50"/>
    </location>
</feature>
<feature type="peptide" id="PRO_0000035059" description="Psi-conotoxin PIIIE" evidence="3">
    <location>
        <begin position="51"/>
        <end position="74"/>
    </location>
</feature>
<feature type="modified residue" description="4-hydroxyproline" evidence="2 3 4">
    <location>
        <position position="52"/>
    </location>
</feature>
<feature type="modified residue" description="4-hydroxyproline" evidence="2 3 4">
    <location>
        <position position="53"/>
    </location>
</feature>
<feature type="modified residue" description="4-hydroxyproline" evidence="2 3 4">
    <location>
        <position position="64"/>
    </location>
</feature>
<feature type="modified residue" description="Glycine amide" evidence="2 3 4">
    <location>
        <position position="74"/>
    </location>
</feature>
<feature type="disulfide bond" evidence="2 4 9 10">
    <location>
        <begin position="54"/>
        <end position="66"/>
    </location>
</feature>
<feature type="disulfide bond" evidence="2 4 9 10">
    <location>
        <begin position="55"/>
        <end position="71"/>
    </location>
</feature>
<feature type="disulfide bond" evidence="2 4 9 10">
    <location>
        <begin position="60"/>
        <end position="72"/>
    </location>
</feature>
<feature type="sequence variant">
    <original>M</original>
    <variation>L</variation>
    <location>
        <position position="56"/>
    </location>
</feature>
<feature type="sequence variant">
    <original>R</original>
    <variation>K</variation>
    <location>
        <position position="59"/>
    </location>
</feature>
<feature type="sequence variant">
    <original>G</original>
    <variation>R</variation>
    <location>
        <position position="74"/>
    </location>
</feature>
<feature type="strand" evidence="11">
    <location>
        <begin position="54"/>
        <end position="56"/>
    </location>
</feature>
<feature type="helix" evidence="12">
    <location>
        <begin position="66"/>
        <end position="68"/>
    </location>
</feature>
<feature type="turn" evidence="12">
    <location>
        <begin position="71"/>
        <end position="73"/>
    </location>
</feature>
<dbReference type="PIR" id="A58999">
    <property type="entry name" value="A58999"/>
</dbReference>
<dbReference type="PDB" id="1AS5">
    <property type="method" value="NMR"/>
    <property type="chains" value="A=51-73"/>
</dbReference>
<dbReference type="PDB" id="1JLO">
    <property type="method" value="NMR"/>
    <property type="chains" value="A=51-73"/>
</dbReference>
<dbReference type="PDBsum" id="1AS5"/>
<dbReference type="PDBsum" id="1JLO"/>
<dbReference type="SMR" id="P56529"/>
<dbReference type="ConoServer" id="1406">
    <property type="toxin name" value="PIIIE precursor"/>
</dbReference>
<dbReference type="EvolutionaryTrace" id="P56529"/>
<dbReference type="GO" id="GO:0005576">
    <property type="term" value="C:extracellular region"/>
    <property type="evidence" value="ECO:0007669"/>
    <property type="project" value="UniProtKB-SubCell"/>
</dbReference>
<dbReference type="GO" id="GO:0035792">
    <property type="term" value="C:host cell postsynaptic membrane"/>
    <property type="evidence" value="ECO:0007669"/>
    <property type="project" value="UniProtKB-KW"/>
</dbReference>
<dbReference type="GO" id="GO:0030550">
    <property type="term" value="F:acetylcholine receptor inhibitor activity"/>
    <property type="evidence" value="ECO:0007669"/>
    <property type="project" value="UniProtKB-KW"/>
</dbReference>
<dbReference type="GO" id="GO:0008200">
    <property type="term" value="F:ion channel inhibitor activity"/>
    <property type="evidence" value="ECO:0007669"/>
    <property type="project" value="InterPro"/>
</dbReference>
<dbReference type="GO" id="GO:0090729">
    <property type="term" value="F:toxin activity"/>
    <property type="evidence" value="ECO:0007669"/>
    <property type="project" value="UniProtKB-KW"/>
</dbReference>
<dbReference type="InterPro" id="IPR004214">
    <property type="entry name" value="Conotoxin"/>
</dbReference>
<dbReference type="Pfam" id="PF02950">
    <property type="entry name" value="Conotoxin"/>
    <property type="match status" value="1"/>
</dbReference>